<evidence type="ECO:0000255" key="1">
    <source>
        <dbReference type="HAMAP-Rule" id="MF_00099"/>
    </source>
</evidence>
<comment type="function">
    <text evidence="1">Involved in chemotaxis. Part of a chemotaxis signal transduction system that modulates chemotaxis in response to various stimuli. Catalyzes the demethylation of specific methylglutamate residues introduced into the chemoreceptors (methyl-accepting chemotaxis proteins or MCP) by CheR. Also mediates the irreversible deamidation of specific glutamine residues to glutamic acid.</text>
</comment>
<comment type="catalytic activity">
    <reaction evidence="1">
        <text>[protein]-L-glutamate 5-O-methyl ester + H2O = L-glutamyl-[protein] + methanol + H(+)</text>
        <dbReference type="Rhea" id="RHEA:23236"/>
        <dbReference type="Rhea" id="RHEA-COMP:10208"/>
        <dbReference type="Rhea" id="RHEA-COMP:10311"/>
        <dbReference type="ChEBI" id="CHEBI:15377"/>
        <dbReference type="ChEBI" id="CHEBI:15378"/>
        <dbReference type="ChEBI" id="CHEBI:17790"/>
        <dbReference type="ChEBI" id="CHEBI:29973"/>
        <dbReference type="ChEBI" id="CHEBI:82795"/>
        <dbReference type="EC" id="3.1.1.61"/>
    </reaction>
</comment>
<comment type="catalytic activity">
    <reaction evidence="1">
        <text>L-glutaminyl-[protein] + H2O = L-glutamyl-[protein] + NH4(+)</text>
        <dbReference type="Rhea" id="RHEA:16441"/>
        <dbReference type="Rhea" id="RHEA-COMP:10207"/>
        <dbReference type="Rhea" id="RHEA-COMP:10208"/>
        <dbReference type="ChEBI" id="CHEBI:15377"/>
        <dbReference type="ChEBI" id="CHEBI:28938"/>
        <dbReference type="ChEBI" id="CHEBI:29973"/>
        <dbReference type="ChEBI" id="CHEBI:30011"/>
        <dbReference type="EC" id="3.5.1.44"/>
    </reaction>
</comment>
<comment type="subcellular location">
    <subcellularLocation>
        <location evidence="1">Cytoplasm</location>
    </subcellularLocation>
</comment>
<comment type="domain">
    <text evidence="1">Contains a C-terminal catalytic domain, and an N-terminal region which modulates catalytic activity.</text>
</comment>
<comment type="PTM">
    <text evidence="1">Phosphorylated by CheA. Phosphorylation of the N-terminal regulatory domain activates the methylesterase activity.</text>
</comment>
<comment type="similarity">
    <text evidence="1">Belongs to the CheB family.</text>
</comment>
<reference key="1">
    <citation type="journal article" date="2005" name="PLoS Genet.">
        <title>Life in hot carbon monoxide: the complete genome sequence of Carboxydothermus hydrogenoformans Z-2901.</title>
        <authorList>
            <person name="Wu M."/>
            <person name="Ren Q."/>
            <person name="Durkin A.S."/>
            <person name="Daugherty S.C."/>
            <person name="Brinkac L.M."/>
            <person name="Dodson R.J."/>
            <person name="Madupu R."/>
            <person name="Sullivan S.A."/>
            <person name="Kolonay J.F."/>
            <person name="Nelson W.C."/>
            <person name="Tallon L.J."/>
            <person name="Jones K.M."/>
            <person name="Ulrich L.E."/>
            <person name="Gonzalez J.M."/>
            <person name="Zhulin I.B."/>
            <person name="Robb F.T."/>
            <person name="Eisen J.A."/>
        </authorList>
    </citation>
    <scope>NUCLEOTIDE SEQUENCE [LARGE SCALE GENOMIC DNA]</scope>
    <source>
        <strain>ATCC BAA-161 / DSM 6008 / Z-2901</strain>
    </source>
</reference>
<keyword id="KW-0145">Chemotaxis</keyword>
<keyword id="KW-0963">Cytoplasm</keyword>
<keyword id="KW-0378">Hydrolase</keyword>
<keyword id="KW-0597">Phosphoprotein</keyword>
<keyword id="KW-1185">Reference proteome</keyword>
<dbReference type="EC" id="3.1.1.61" evidence="1"/>
<dbReference type="EC" id="3.5.1.44" evidence="1"/>
<dbReference type="EMBL" id="CP000141">
    <property type="protein sequence ID" value="ABB14452.1"/>
    <property type="molecule type" value="Genomic_DNA"/>
</dbReference>
<dbReference type="RefSeq" id="WP_011343891.1">
    <property type="nucleotide sequence ID" value="NC_007503.1"/>
</dbReference>
<dbReference type="SMR" id="Q3ADG9"/>
<dbReference type="STRING" id="246194.CHY_0968"/>
<dbReference type="KEGG" id="chy:CHY_0968"/>
<dbReference type="eggNOG" id="COG2201">
    <property type="taxonomic scope" value="Bacteria"/>
</dbReference>
<dbReference type="HOGENOM" id="CLU_000445_51_0_9"/>
<dbReference type="InParanoid" id="Q3ADG9"/>
<dbReference type="OrthoDB" id="9793421at2"/>
<dbReference type="Proteomes" id="UP000002706">
    <property type="component" value="Chromosome"/>
</dbReference>
<dbReference type="GO" id="GO:0005737">
    <property type="term" value="C:cytoplasm"/>
    <property type="evidence" value="ECO:0007669"/>
    <property type="project" value="UniProtKB-SubCell"/>
</dbReference>
<dbReference type="GO" id="GO:0000156">
    <property type="term" value="F:phosphorelay response regulator activity"/>
    <property type="evidence" value="ECO:0007669"/>
    <property type="project" value="InterPro"/>
</dbReference>
<dbReference type="GO" id="GO:0008984">
    <property type="term" value="F:protein-glutamate methylesterase activity"/>
    <property type="evidence" value="ECO:0007669"/>
    <property type="project" value="UniProtKB-UniRule"/>
</dbReference>
<dbReference type="GO" id="GO:0050568">
    <property type="term" value="F:protein-glutamine glutaminase activity"/>
    <property type="evidence" value="ECO:0007669"/>
    <property type="project" value="UniProtKB-UniRule"/>
</dbReference>
<dbReference type="GO" id="GO:0006935">
    <property type="term" value="P:chemotaxis"/>
    <property type="evidence" value="ECO:0007669"/>
    <property type="project" value="UniProtKB-UniRule"/>
</dbReference>
<dbReference type="CDD" id="cd16432">
    <property type="entry name" value="CheB_Rec"/>
    <property type="match status" value="1"/>
</dbReference>
<dbReference type="CDD" id="cd17541">
    <property type="entry name" value="REC_CheB-like"/>
    <property type="match status" value="1"/>
</dbReference>
<dbReference type="Gene3D" id="3.40.50.2300">
    <property type="match status" value="1"/>
</dbReference>
<dbReference type="Gene3D" id="3.40.50.180">
    <property type="entry name" value="Methylesterase CheB, C-terminal domain"/>
    <property type="match status" value="1"/>
</dbReference>
<dbReference type="HAMAP" id="MF_00099">
    <property type="entry name" value="CheB_chemtxs"/>
    <property type="match status" value="1"/>
</dbReference>
<dbReference type="InterPro" id="IPR008248">
    <property type="entry name" value="CheB-like"/>
</dbReference>
<dbReference type="InterPro" id="IPR035909">
    <property type="entry name" value="CheB_C"/>
</dbReference>
<dbReference type="InterPro" id="IPR011006">
    <property type="entry name" value="CheY-like_superfamily"/>
</dbReference>
<dbReference type="InterPro" id="IPR000673">
    <property type="entry name" value="Sig_transdc_resp-reg_Me-estase"/>
</dbReference>
<dbReference type="InterPro" id="IPR001789">
    <property type="entry name" value="Sig_transdc_resp-reg_receiver"/>
</dbReference>
<dbReference type="NCBIfam" id="NF001965">
    <property type="entry name" value="PRK00742.1"/>
    <property type="match status" value="1"/>
</dbReference>
<dbReference type="PANTHER" id="PTHR42872">
    <property type="entry name" value="PROTEIN-GLUTAMATE METHYLESTERASE/PROTEIN-GLUTAMINE GLUTAMINASE"/>
    <property type="match status" value="1"/>
</dbReference>
<dbReference type="PANTHER" id="PTHR42872:SF6">
    <property type="entry name" value="PROTEIN-GLUTAMATE METHYLESTERASE_PROTEIN-GLUTAMINE GLUTAMINASE"/>
    <property type="match status" value="1"/>
</dbReference>
<dbReference type="Pfam" id="PF01339">
    <property type="entry name" value="CheB_methylest"/>
    <property type="match status" value="1"/>
</dbReference>
<dbReference type="Pfam" id="PF00072">
    <property type="entry name" value="Response_reg"/>
    <property type="match status" value="1"/>
</dbReference>
<dbReference type="PIRSF" id="PIRSF000876">
    <property type="entry name" value="RR_chemtxs_CheB"/>
    <property type="match status" value="1"/>
</dbReference>
<dbReference type="SMART" id="SM00448">
    <property type="entry name" value="REC"/>
    <property type="match status" value="1"/>
</dbReference>
<dbReference type="SUPFAM" id="SSF52172">
    <property type="entry name" value="CheY-like"/>
    <property type="match status" value="1"/>
</dbReference>
<dbReference type="SUPFAM" id="SSF52738">
    <property type="entry name" value="Methylesterase CheB, C-terminal domain"/>
    <property type="match status" value="1"/>
</dbReference>
<dbReference type="PROSITE" id="PS50122">
    <property type="entry name" value="CHEB"/>
    <property type="match status" value="1"/>
</dbReference>
<dbReference type="PROSITE" id="PS50110">
    <property type="entry name" value="RESPONSE_REGULATORY"/>
    <property type="match status" value="1"/>
</dbReference>
<accession>Q3ADG9</accession>
<organism>
    <name type="scientific">Carboxydothermus hydrogenoformans (strain ATCC BAA-161 / DSM 6008 / Z-2901)</name>
    <dbReference type="NCBI Taxonomy" id="246194"/>
    <lineage>
        <taxon>Bacteria</taxon>
        <taxon>Bacillati</taxon>
        <taxon>Bacillota</taxon>
        <taxon>Clostridia</taxon>
        <taxon>Thermoanaerobacterales</taxon>
        <taxon>Thermoanaerobacteraceae</taxon>
        <taxon>Carboxydothermus</taxon>
    </lineage>
</organism>
<gene>
    <name evidence="1" type="primary">cheB1</name>
    <name type="ordered locus">CHY_0968</name>
</gene>
<protein>
    <recommendedName>
        <fullName evidence="1">Protein-glutamate methylesterase/protein-glutamine glutaminase 1</fullName>
        <ecNumber evidence="1">3.1.1.61</ecNumber>
        <ecNumber evidence="1">3.5.1.44</ecNumber>
    </recommendedName>
</protein>
<name>CHEB1_CARHZ</name>
<proteinExistence type="inferred from homology"/>
<feature type="chain" id="PRO_0000225452" description="Protein-glutamate methylesterase/protein-glutamine glutaminase 1">
    <location>
        <begin position="1"/>
        <end position="340"/>
    </location>
</feature>
<feature type="domain" description="Response regulatory" evidence="1">
    <location>
        <begin position="5"/>
        <end position="122"/>
    </location>
</feature>
<feature type="domain" description="CheB-type methylesterase" evidence="1">
    <location>
        <begin position="148"/>
        <end position="340"/>
    </location>
</feature>
<feature type="active site" evidence="1">
    <location>
        <position position="160"/>
    </location>
</feature>
<feature type="active site" evidence="1">
    <location>
        <position position="187"/>
    </location>
</feature>
<feature type="active site" evidence="1">
    <location>
        <position position="285"/>
    </location>
</feature>
<feature type="modified residue" description="4-aspartylphosphate" evidence="1">
    <location>
        <position position="56"/>
    </location>
</feature>
<sequence>MSRYKLFIVDDSALIRLRLKTSLALWPEIQIVGEAENGQEALKKIPLVKPDVVTLDLEMPVLDGLSTLKELNKVYPVPVIMLSSLTTHGAKATIEALENGAVDFVPKDGDWNKVVSELKEKIKIAVLAKKRPKPFTGGTLNPKNVILGKNGRQLVVIGASTGGPPALREIIPKLPQTFPVPIVIIQHITRGFSKPLADQLARVSRLKVKEAEKDEQLLPGTVYVAPAGYTFKIDKQGGSLTAKIIEPVEYLPAHFYPSVDEAMLSAAEVTGSKTIGVLLTGMGKDGALGMKAIKERGGYTIAQDEETSVVYGMPKAAIDIGGVSRVLPLSAIAEEIAANI</sequence>